<dbReference type="EC" id="3.5.1.28"/>
<dbReference type="EMBL" id="AP008934">
    <property type="protein sequence ID" value="BAE19436.1"/>
    <property type="molecule type" value="Genomic_DNA"/>
</dbReference>
<dbReference type="RefSeq" id="WP_011303892.1">
    <property type="nucleotide sequence ID" value="NZ_MTGA01000035.1"/>
</dbReference>
<dbReference type="SMR" id="Q49UX4"/>
<dbReference type="CAZy" id="CBM50">
    <property type="family name" value="Carbohydrate-Binding Module Family 50"/>
</dbReference>
<dbReference type="GeneID" id="3615679"/>
<dbReference type="KEGG" id="ssp:SSP2291"/>
<dbReference type="PATRIC" id="fig|342451.11.peg.2282"/>
<dbReference type="eggNOG" id="COG1388">
    <property type="taxonomic scope" value="Bacteria"/>
</dbReference>
<dbReference type="eggNOG" id="COG3942">
    <property type="taxonomic scope" value="Bacteria"/>
</dbReference>
<dbReference type="HOGENOM" id="CLU_016043_1_3_9"/>
<dbReference type="OrthoDB" id="9813368at2"/>
<dbReference type="Proteomes" id="UP000006371">
    <property type="component" value="Chromosome"/>
</dbReference>
<dbReference type="GO" id="GO:0009986">
    <property type="term" value="C:cell surface"/>
    <property type="evidence" value="ECO:0007669"/>
    <property type="project" value="UniProtKB-SubCell"/>
</dbReference>
<dbReference type="GO" id="GO:0005576">
    <property type="term" value="C:extracellular region"/>
    <property type="evidence" value="ECO:0007669"/>
    <property type="project" value="UniProtKB-SubCell"/>
</dbReference>
<dbReference type="GO" id="GO:0008932">
    <property type="term" value="F:lytic endotransglycosylase activity"/>
    <property type="evidence" value="ECO:0007669"/>
    <property type="project" value="TreeGrafter"/>
</dbReference>
<dbReference type="GO" id="GO:0008745">
    <property type="term" value="F:N-acetylmuramoyl-L-alanine amidase activity"/>
    <property type="evidence" value="ECO:0007669"/>
    <property type="project" value="UniProtKB-EC"/>
</dbReference>
<dbReference type="GO" id="GO:0071555">
    <property type="term" value="P:cell wall organization"/>
    <property type="evidence" value="ECO:0007669"/>
    <property type="project" value="UniProtKB-KW"/>
</dbReference>
<dbReference type="GO" id="GO:0042742">
    <property type="term" value="P:defense response to bacterium"/>
    <property type="evidence" value="ECO:0007669"/>
    <property type="project" value="UniProtKB-KW"/>
</dbReference>
<dbReference type="GO" id="GO:0000917">
    <property type="term" value="P:division septum assembly"/>
    <property type="evidence" value="ECO:0007669"/>
    <property type="project" value="UniProtKB-KW"/>
</dbReference>
<dbReference type="GO" id="GO:0031640">
    <property type="term" value="P:killing of cells of another organism"/>
    <property type="evidence" value="ECO:0007669"/>
    <property type="project" value="UniProtKB-KW"/>
</dbReference>
<dbReference type="CDD" id="cd00118">
    <property type="entry name" value="LysM"/>
    <property type="match status" value="3"/>
</dbReference>
<dbReference type="Gene3D" id="3.90.1720.10">
    <property type="entry name" value="endopeptidase domain like (from Nostoc punctiforme)"/>
    <property type="match status" value="1"/>
</dbReference>
<dbReference type="Gene3D" id="3.10.350.10">
    <property type="entry name" value="LysM domain"/>
    <property type="match status" value="3"/>
</dbReference>
<dbReference type="InterPro" id="IPR007921">
    <property type="entry name" value="CHAP_dom"/>
</dbReference>
<dbReference type="InterPro" id="IPR018392">
    <property type="entry name" value="LysM_dom"/>
</dbReference>
<dbReference type="InterPro" id="IPR036779">
    <property type="entry name" value="LysM_dom_sf"/>
</dbReference>
<dbReference type="InterPro" id="IPR038765">
    <property type="entry name" value="Papain-like_cys_pep_sf"/>
</dbReference>
<dbReference type="PANTHER" id="PTHR33734">
    <property type="entry name" value="LYSM DOMAIN-CONTAINING GPI-ANCHORED PROTEIN 2"/>
    <property type="match status" value="1"/>
</dbReference>
<dbReference type="PANTHER" id="PTHR33734:SF22">
    <property type="entry name" value="MEMBRANE-BOUND LYTIC MUREIN TRANSGLYCOSYLASE D"/>
    <property type="match status" value="1"/>
</dbReference>
<dbReference type="Pfam" id="PF05257">
    <property type="entry name" value="CHAP"/>
    <property type="match status" value="1"/>
</dbReference>
<dbReference type="Pfam" id="PF01476">
    <property type="entry name" value="LysM"/>
    <property type="match status" value="3"/>
</dbReference>
<dbReference type="SMART" id="SM00257">
    <property type="entry name" value="LysM"/>
    <property type="match status" value="3"/>
</dbReference>
<dbReference type="SUPFAM" id="SSF54001">
    <property type="entry name" value="Cysteine proteinases"/>
    <property type="match status" value="1"/>
</dbReference>
<dbReference type="SUPFAM" id="SSF54106">
    <property type="entry name" value="LysM domain"/>
    <property type="match status" value="3"/>
</dbReference>
<dbReference type="PROSITE" id="PS50911">
    <property type="entry name" value="CHAP"/>
    <property type="match status" value="1"/>
</dbReference>
<dbReference type="PROSITE" id="PS51782">
    <property type="entry name" value="LYSM"/>
    <property type="match status" value="3"/>
</dbReference>
<evidence type="ECO:0000250" key="1"/>
<evidence type="ECO:0000255" key="2"/>
<evidence type="ECO:0000255" key="3">
    <source>
        <dbReference type="PROSITE-ProRule" id="PRU00048"/>
    </source>
</evidence>
<evidence type="ECO:0000255" key="4">
    <source>
        <dbReference type="PROSITE-ProRule" id="PRU01118"/>
    </source>
</evidence>
<evidence type="ECO:0000256" key="5">
    <source>
        <dbReference type="SAM" id="MobiDB-lite"/>
    </source>
</evidence>
<proteinExistence type="inferred from homology"/>
<accession>Q49UX4</accession>
<sequence length="327" mass="34491">MRKKIIATVIGTSALAAVTWTNADAATTYKVKSGDSLWSIANKYNMSVAKLKSLNNLTSNVIFPNQSLKVSGSTSSSTSSNTSTGSTYTVKSGDTLSGIAAKYGTTYQKIMSLNGLSNFNIYPGQKLKVSGAASSSSSNTSGNTSSGSTTTYTVKSGDSLSAIAAKYGTTYQKIMSLNGLTNFNIYPGQKLKVSGKASTGGSGSSSTGSAGYKTPVFNHSNLYDWGQCTWHVFNKRAQIGKGISTYWWNANNWDTAAAADGYTIDRKATVGSILQSDMGYYGHVAFVESVNANGSITISEMNYSASPGIVTYRTIPASQVSSYVYIH</sequence>
<keyword id="KW-0929">Antimicrobial</keyword>
<keyword id="KW-0081">Bacteriolytic enzyme</keyword>
<keyword id="KW-0131">Cell cycle</keyword>
<keyword id="KW-0132">Cell division</keyword>
<keyword id="KW-0961">Cell wall biogenesis/degradation</keyword>
<keyword id="KW-0378">Hydrolase</keyword>
<keyword id="KW-1185">Reference proteome</keyword>
<keyword id="KW-0677">Repeat</keyword>
<keyword id="KW-0964">Secreted</keyword>
<keyword id="KW-0717">Septation</keyword>
<keyword id="KW-0732">Signal</keyword>
<keyword id="KW-0843">Virulence</keyword>
<comment type="function">
    <text evidence="1">Peptidoglycan hydrolase involved in the splitting of the septum during cell division.</text>
</comment>
<comment type="catalytic activity">
    <reaction>
        <text>Hydrolyzes the link between N-acetylmuramoyl residues and L-amino acid residues in certain cell-wall glycopeptides.</text>
        <dbReference type="EC" id="3.5.1.28"/>
    </reaction>
</comment>
<comment type="subcellular location">
    <subcellularLocation>
        <location evidence="1">Secreted</location>
    </subcellularLocation>
    <subcellularLocation>
        <location evidence="1">Cell surface</location>
    </subcellularLocation>
</comment>
<feature type="signal peptide" evidence="2">
    <location>
        <begin position="1"/>
        <end position="25"/>
    </location>
</feature>
<feature type="chain" id="PRO_0000231630" description="N-acetylmuramoyl-L-alanine amidase sle1">
    <location>
        <begin position="26"/>
        <end position="327"/>
    </location>
</feature>
<feature type="domain" description="LysM 1" evidence="4">
    <location>
        <begin position="27"/>
        <end position="70"/>
    </location>
</feature>
<feature type="domain" description="LysM 2" evidence="4">
    <location>
        <begin position="86"/>
        <end position="129"/>
    </location>
</feature>
<feature type="domain" description="LysM 3" evidence="4">
    <location>
        <begin position="150"/>
        <end position="193"/>
    </location>
</feature>
<feature type="domain" description="Peptidase C51" evidence="3">
    <location>
        <begin position="203"/>
        <end position="327"/>
    </location>
</feature>
<feature type="region of interest" description="Disordered" evidence="5">
    <location>
        <begin position="68"/>
        <end position="89"/>
    </location>
</feature>
<feature type="compositionally biased region" description="Low complexity" evidence="5">
    <location>
        <begin position="71"/>
        <end position="87"/>
    </location>
</feature>
<name>SLE1_STAS1</name>
<gene>
    <name type="primary">sle1</name>
    <name type="synonym">aaa</name>
    <name type="ordered locus">SSP2291</name>
</gene>
<protein>
    <recommendedName>
        <fullName>N-acetylmuramoyl-L-alanine amidase sle1</fullName>
        <ecNumber>3.5.1.28</ecNumber>
    </recommendedName>
</protein>
<reference key="1">
    <citation type="journal article" date="2005" name="Proc. Natl. Acad. Sci. U.S.A.">
        <title>Whole genome sequence of Staphylococcus saprophyticus reveals the pathogenesis of uncomplicated urinary tract infection.</title>
        <authorList>
            <person name="Kuroda M."/>
            <person name="Yamashita A."/>
            <person name="Hirakawa H."/>
            <person name="Kumano M."/>
            <person name="Morikawa K."/>
            <person name="Higashide M."/>
            <person name="Maruyama A."/>
            <person name="Inose Y."/>
            <person name="Matoba K."/>
            <person name="Toh H."/>
            <person name="Kuhara S."/>
            <person name="Hattori M."/>
            <person name="Ohta T."/>
        </authorList>
    </citation>
    <scope>NUCLEOTIDE SEQUENCE [LARGE SCALE GENOMIC DNA]</scope>
    <source>
        <strain>ATCC 15305 / DSM 20229 / NCIMB 8711 / NCTC 7292 / S-41</strain>
    </source>
</reference>
<organism>
    <name type="scientific">Staphylococcus saprophyticus subsp. saprophyticus (strain ATCC 15305 / DSM 20229 / NCIMB 8711 / NCTC 7292 / S-41)</name>
    <dbReference type="NCBI Taxonomy" id="342451"/>
    <lineage>
        <taxon>Bacteria</taxon>
        <taxon>Bacillati</taxon>
        <taxon>Bacillota</taxon>
        <taxon>Bacilli</taxon>
        <taxon>Bacillales</taxon>
        <taxon>Staphylococcaceae</taxon>
        <taxon>Staphylococcus</taxon>
    </lineage>
</organism>